<feature type="chain" id="PRO_0000353225" description="Photosystem II reaction center protein I">
    <location>
        <begin position="1"/>
        <end position="37"/>
    </location>
</feature>
<feature type="transmembrane region" description="Helical" evidence="1">
    <location>
        <begin position="1"/>
        <end position="21"/>
    </location>
</feature>
<sequence>MFILKLFVYTVVIFFVSLFIFGFLSNDPRRNPEPEED</sequence>
<accession>A7M8Y8</accession>
<reference key="1">
    <citation type="journal article" date="2007" name="BMC Plant Biol.">
        <title>Complete DNA sequences of the plastid genomes of two parasitic flowering plant species, Cuscuta reflexa and Cuscuta gronovii.</title>
        <authorList>
            <person name="Funk H.T."/>
            <person name="Berg S."/>
            <person name="Krupinska K."/>
            <person name="Maier U.-G."/>
            <person name="Krause K."/>
        </authorList>
    </citation>
    <scope>NUCLEOTIDE SEQUENCE [LARGE SCALE GENOMIC DNA]</scope>
</reference>
<evidence type="ECO:0000255" key="1">
    <source>
        <dbReference type="HAMAP-Rule" id="MF_01316"/>
    </source>
</evidence>
<evidence type="ECO:0000305" key="2"/>
<gene>
    <name evidence="1" type="primary">psbI</name>
</gene>
<name>PSBI_CUSGR</name>
<proteinExistence type="inferred from homology"/>
<keyword id="KW-0472">Membrane</keyword>
<keyword id="KW-0602">Photosynthesis</keyword>
<keyword id="KW-0604">Photosystem II</keyword>
<keyword id="KW-0934">Plastid</keyword>
<keyword id="KW-0674">Reaction center</keyword>
<keyword id="KW-0812">Transmembrane</keyword>
<keyword id="KW-1133">Transmembrane helix</keyword>
<organism>
    <name type="scientific">Cuscuta gronovii</name>
    <name type="common">Common dodder</name>
    <name type="synonym">Epithymum gronovii</name>
    <dbReference type="NCBI Taxonomy" id="35886"/>
    <lineage>
        <taxon>Eukaryota</taxon>
        <taxon>Viridiplantae</taxon>
        <taxon>Streptophyta</taxon>
        <taxon>Embryophyta</taxon>
        <taxon>Tracheophyta</taxon>
        <taxon>Spermatophyta</taxon>
        <taxon>Magnoliopsida</taxon>
        <taxon>eudicotyledons</taxon>
        <taxon>Gunneridae</taxon>
        <taxon>Pentapetalae</taxon>
        <taxon>asterids</taxon>
        <taxon>lamiids</taxon>
        <taxon>Solanales</taxon>
        <taxon>Convolvulaceae</taxon>
        <taxon>Cuscuteae</taxon>
        <taxon>Cuscuta</taxon>
        <taxon>Cuscuta subgen. Grammica</taxon>
        <taxon>Cuscuta sect. Oxycarpae</taxon>
    </lineage>
</organism>
<dbReference type="EMBL" id="AM711639">
    <property type="protein sequence ID" value="CAM98316.1"/>
    <property type="molecule type" value="Genomic_DNA"/>
</dbReference>
<dbReference type="RefSeq" id="YP_001430030.1">
    <property type="nucleotide sequence ID" value="NC_009765.1"/>
</dbReference>
<dbReference type="SMR" id="A7M8Y8"/>
<dbReference type="GeneID" id="5536765"/>
<dbReference type="GO" id="GO:0009539">
    <property type="term" value="C:photosystem II reaction center"/>
    <property type="evidence" value="ECO:0007669"/>
    <property type="project" value="InterPro"/>
</dbReference>
<dbReference type="GO" id="GO:0042170">
    <property type="term" value="C:plastid membrane"/>
    <property type="evidence" value="ECO:0007669"/>
    <property type="project" value="UniProtKB-SubCell"/>
</dbReference>
<dbReference type="GO" id="GO:0042651">
    <property type="term" value="C:thylakoid membrane"/>
    <property type="evidence" value="ECO:0007669"/>
    <property type="project" value="UniProtKB-UniRule"/>
</dbReference>
<dbReference type="GO" id="GO:0015979">
    <property type="term" value="P:photosynthesis"/>
    <property type="evidence" value="ECO:0007669"/>
    <property type="project" value="UniProtKB-UniRule"/>
</dbReference>
<dbReference type="HAMAP" id="MF_01316">
    <property type="entry name" value="PSII_PsbI"/>
    <property type="match status" value="1"/>
</dbReference>
<dbReference type="InterPro" id="IPR003686">
    <property type="entry name" value="PSII_PsbI"/>
</dbReference>
<dbReference type="InterPro" id="IPR037271">
    <property type="entry name" value="PSII_PsbI_sf"/>
</dbReference>
<dbReference type="PANTHER" id="PTHR35772">
    <property type="entry name" value="PHOTOSYSTEM II REACTION CENTER PROTEIN I"/>
    <property type="match status" value="1"/>
</dbReference>
<dbReference type="PANTHER" id="PTHR35772:SF1">
    <property type="entry name" value="PHOTOSYSTEM II REACTION CENTER PROTEIN I"/>
    <property type="match status" value="1"/>
</dbReference>
<dbReference type="Pfam" id="PF02532">
    <property type="entry name" value="PsbI"/>
    <property type="match status" value="1"/>
</dbReference>
<dbReference type="SUPFAM" id="SSF161041">
    <property type="entry name" value="Photosystem II reaction center protein I, PsbI"/>
    <property type="match status" value="1"/>
</dbReference>
<geneLocation type="plastid"/>
<comment type="function">
    <text evidence="1">One of the components of the core complex of photosystem II (PSII), required for its stability and/or assembly. PSII is a light-driven water:plastoquinone oxidoreductase that uses light energy to abstract electrons from H(2)O, generating O(2) and a proton gradient subsequently used for ATP formation. It consists of a core antenna complex that captures photons, and an electron transfer chain that converts photonic excitation into a charge separation.</text>
</comment>
<comment type="subunit">
    <text evidence="1">PSII is composed of 1 copy each of membrane proteins PsbA, PsbB, PsbC, PsbD, PsbE, PsbF, PsbH, PsbI, PsbJ, PsbK, PsbL, PsbM, PsbT, PsbX, PsbY, PsbZ, Psb30/Ycf12, at least 3 peripheral proteins of the oxygen-evolving complex and a large number of cofactors. It forms dimeric complexes.</text>
</comment>
<comment type="subcellular location">
    <subcellularLocation>
        <location evidence="2">Plastid membrane</location>
        <topology evidence="1">Single-pass membrane protein</topology>
    </subcellularLocation>
</comment>
<comment type="similarity">
    <text evidence="1">Belongs to the PsbI family.</text>
</comment>
<comment type="caution">
    <text evidence="2">Young tissue from this organism is photosynthetic and contains some thylakoids, although the photosynthetic activity does not exceed the light compensation point.</text>
</comment>
<protein>
    <recommendedName>
        <fullName evidence="1">Photosystem II reaction center protein I</fullName>
        <shortName evidence="1">PSII-I</shortName>
    </recommendedName>
    <alternativeName>
        <fullName evidence="1">PSII 4.8 kDa protein</fullName>
    </alternativeName>
</protein>